<dbReference type="EC" id="7.-.-.-" evidence="1"/>
<dbReference type="EMBL" id="CU928164">
    <property type="protein sequence ID" value="CAR17561.1"/>
    <property type="molecule type" value="Genomic_DNA"/>
</dbReference>
<dbReference type="RefSeq" id="WP_000991809.1">
    <property type="nucleotide sequence ID" value="NC_011750.1"/>
</dbReference>
<dbReference type="RefSeq" id="YP_002407433.1">
    <property type="nucleotide sequence ID" value="NC_011750.1"/>
</dbReference>
<dbReference type="STRING" id="585057.ECIAI39_1428"/>
<dbReference type="GeneID" id="93775780"/>
<dbReference type="KEGG" id="ect:ECIAI39_1428"/>
<dbReference type="PATRIC" id="fig|585057.6.peg.1494"/>
<dbReference type="HOGENOM" id="CLU_063448_2_0_6"/>
<dbReference type="Proteomes" id="UP000000749">
    <property type="component" value="Chromosome"/>
</dbReference>
<dbReference type="GO" id="GO:0005886">
    <property type="term" value="C:plasma membrane"/>
    <property type="evidence" value="ECO:0007669"/>
    <property type="project" value="UniProtKB-SubCell"/>
</dbReference>
<dbReference type="GO" id="GO:0051539">
    <property type="term" value="F:4 iron, 4 sulfur cluster binding"/>
    <property type="evidence" value="ECO:0007669"/>
    <property type="project" value="UniProtKB-UniRule"/>
</dbReference>
<dbReference type="GO" id="GO:0009055">
    <property type="term" value="F:electron transfer activity"/>
    <property type="evidence" value="ECO:0007669"/>
    <property type="project" value="InterPro"/>
</dbReference>
<dbReference type="GO" id="GO:0046872">
    <property type="term" value="F:metal ion binding"/>
    <property type="evidence" value="ECO:0007669"/>
    <property type="project" value="UniProtKB-KW"/>
</dbReference>
<dbReference type="GO" id="GO:0022900">
    <property type="term" value="P:electron transport chain"/>
    <property type="evidence" value="ECO:0007669"/>
    <property type="project" value="UniProtKB-UniRule"/>
</dbReference>
<dbReference type="FunFam" id="1.10.15.40:FF:000001">
    <property type="entry name" value="Ion-translocating oxidoreductase complex subunit B"/>
    <property type="match status" value="1"/>
</dbReference>
<dbReference type="Gene3D" id="3.30.70.20">
    <property type="match status" value="1"/>
</dbReference>
<dbReference type="Gene3D" id="1.10.15.40">
    <property type="entry name" value="Electron transport complex subunit B, putative Fe-S cluster"/>
    <property type="match status" value="1"/>
</dbReference>
<dbReference type="HAMAP" id="MF_00463">
    <property type="entry name" value="RsxB_RnfB"/>
    <property type="match status" value="1"/>
</dbReference>
<dbReference type="InterPro" id="IPR007202">
    <property type="entry name" value="4Fe-4S_dom"/>
</dbReference>
<dbReference type="InterPro" id="IPR017896">
    <property type="entry name" value="4Fe4S_Fe-S-bd"/>
</dbReference>
<dbReference type="InterPro" id="IPR017900">
    <property type="entry name" value="4Fe4S_Fe_S_CS"/>
</dbReference>
<dbReference type="InterPro" id="IPR050395">
    <property type="entry name" value="4Fe4S_Ferredoxin_RnfB"/>
</dbReference>
<dbReference type="InterPro" id="IPR010207">
    <property type="entry name" value="Elect_transpt_cplx_RnfB/RsxB"/>
</dbReference>
<dbReference type="InterPro" id="IPR016463">
    <property type="entry name" value="RnfB/RsxB_Proteobac"/>
</dbReference>
<dbReference type="NCBIfam" id="NF003475">
    <property type="entry name" value="PRK05113.1"/>
    <property type="match status" value="1"/>
</dbReference>
<dbReference type="NCBIfam" id="TIGR01944">
    <property type="entry name" value="rnfB"/>
    <property type="match status" value="1"/>
</dbReference>
<dbReference type="PANTHER" id="PTHR43560">
    <property type="entry name" value="ION-TRANSLOCATING OXIDOREDUCTASE COMPLEX SUBUNIT B"/>
    <property type="match status" value="1"/>
</dbReference>
<dbReference type="PANTHER" id="PTHR43560:SF1">
    <property type="entry name" value="ION-TRANSLOCATING OXIDOREDUCTASE COMPLEX SUBUNIT B"/>
    <property type="match status" value="1"/>
</dbReference>
<dbReference type="Pfam" id="PF14697">
    <property type="entry name" value="Fer4_21"/>
    <property type="match status" value="1"/>
</dbReference>
<dbReference type="Pfam" id="PF04060">
    <property type="entry name" value="FeS"/>
    <property type="match status" value="1"/>
</dbReference>
<dbReference type="PIRSF" id="PIRSF005784">
    <property type="entry name" value="Elect_transpt_RnfB"/>
    <property type="match status" value="1"/>
</dbReference>
<dbReference type="SUPFAM" id="SSF54862">
    <property type="entry name" value="4Fe-4S ferredoxins"/>
    <property type="match status" value="1"/>
</dbReference>
<dbReference type="PROSITE" id="PS51656">
    <property type="entry name" value="4FE4S"/>
    <property type="match status" value="1"/>
</dbReference>
<dbReference type="PROSITE" id="PS00198">
    <property type="entry name" value="4FE4S_FER_1"/>
    <property type="match status" value="2"/>
</dbReference>
<dbReference type="PROSITE" id="PS51379">
    <property type="entry name" value="4FE4S_FER_2"/>
    <property type="match status" value="2"/>
</dbReference>
<gene>
    <name evidence="1" type="primary">rsxB</name>
    <name type="ordered locus">ECIAI39_1428</name>
</gene>
<comment type="function">
    <text evidence="1">Part of a membrane-bound complex that couples electron transfer with translocation of ions across the membrane. Required to maintain the reduced state of SoxR.</text>
</comment>
<comment type="cofactor">
    <cofactor evidence="1">
        <name>[4Fe-4S] cluster</name>
        <dbReference type="ChEBI" id="CHEBI:49883"/>
    </cofactor>
    <text evidence="1">Binds 3 [4Fe-4S] clusters.</text>
</comment>
<comment type="subunit">
    <text evidence="1">The complex is composed of six subunits: RsxA, RsxB, RsxC, RsxD, RsxE and RsxG.</text>
</comment>
<comment type="subcellular location">
    <subcellularLocation>
        <location evidence="1">Cell inner membrane</location>
    </subcellularLocation>
</comment>
<comment type="similarity">
    <text evidence="1">Belongs to the 4Fe4S bacterial-type ferredoxin family. RnfB subfamily.</text>
</comment>
<proteinExistence type="inferred from homology"/>
<name>RSXB_ECO7I</name>
<reference key="1">
    <citation type="journal article" date="2009" name="PLoS Genet.">
        <title>Organised genome dynamics in the Escherichia coli species results in highly diverse adaptive paths.</title>
        <authorList>
            <person name="Touchon M."/>
            <person name="Hoede C."/>
            <person name="Tenaillon O."/>
            <person name="Barbe V."/>
            <person name="Baeriswyl S."/>
            <person name="Bidet P."/>
            <person name="Bingen E."/>
            <person name="Bonacorsi S."/>
            <person name="Bouchier C."/>
            <person name="Bouvet O."/>
            <person name="Calteau A."/>
            <person name="Chiapello H."/>
            <person name="Clermont O."/>
            <person name="Cruveiller S."/>
            <person name="Danchin A."/>
            <person name="Diard M."/>
            <person name="Dossat C."/>
            <person name="Karoui M.E."/>
            <person name="Frapy E."/>
            <person name="Garry L."/>
            <person name="Ghigo J.M."/>
            <person name="Gilles A.M."/>
            <person name="Johnson J."/>
            <person name="Le Bouguenec C."/>
            <person name="Lescat M."/>
            <person name="Mangenot S."/>
            <person name="Martinez-Jehanne V."/>
            <person name="Matic I."/>
            <person name="Nassif X."/>
            <person name="Oztas S."/>
            <person name="Petit M.A."/>
            <person name="Pichon C."/>
            <person name="Rouy Z."/>
            <person name="Ruf C.S."/>
            <person name="Schneider D."/>
            <person name="Tourret J."/>
            <person name="Vacherie B."/>
            <person name="Vallenet D."/>
            <person name="Medigue C."/>
            <person name="Rocha E.P.C."/>
            <person name="Denamur E."/>
        </authorList>
    </citation>
    <scope>NUCLEOTIDE SEQUENCE [LARGE SCALE GENOMIC DNA]</scope>
    <source>
        <strain>IAI39 / ExPEC</strain>
    </source>
</reference>
<accession>B7NU05</accession>
<protein>
    <recommendedName>
        <fullName evidence="1">Ion-translocating oxidoreductase complex subunit B</fullName>
        <ecNumber evidence="1">7.-.-.-</ecNumber>
    </recommendedName>
    <alternativeName>
        <fullName evidence="1">Rsx electron transport complex subunit B</fullName>
    </alternativeName>
</protein>
<evidence type="ECO:0000255" key="1">
    <source>
        <dbReference type="HAMAP-Rule" id="MF_00463"/>
    </source>
</evidence>
<organism>
    <name type="scientific">Escherichia coli O7:K1 (strain IAI39 / ExPEC)</name>
    <dbReference type="NCBI Taxonomy" id="585057"/>
    <lineage>
        <taxon>Bacteria</taxon>
        <taxon>Pseudomonadati</taxon>
        <taxon>Pseudomonadota</taxon>
        <taxon>Gammaproteobacteria</taxon>
        <taxon>Enterobacterales</taxon>
        <taxon>Enterobacteriaceae</taxon>
        <taxon>Escherichia</taxon>
    </lineage>
</organism>
<sequence length="192" mass="20544">MNAIWIAVAAVSLLGLAFGAILGYASRRFAVEDDPVVEKIDEILPQSQCGQCGYPGCRPYAEAISCNGEKINRCAPGGEAVMLKIAELLNVEPQPLDGEAQELTPARMVAVIDENNCIGCTKCIQACPVDAIVGATRAMHTVMSDLCTGCNLCVDPCPTHCISLQPVAETPDSWKWDLNTIPVRIIPVEHHA</sequence>
<keyword id="KW-0004">4Fe-4S</keyword>
<keyword id="KW-0997">Cell inner membrane</keyword>
<keyword id="KW-1003">Cell membrane</keyword>
<keyword id="KW-0249">Electron transport</keyword>
<keyword id="KW-0408">Iron</keyword>
<keyword id="KW-0411">Iron-sulfur</keyword>
<keyword id="KW-0472">Membrane</keyword>
<keyword id="KW-0479">Metal-binding</keyword>
<keyword id="KW-0677">Repeat</keyword>
<keyword id="KW-1278">Translocase</keyword>
<keyword id="KW-0813">Transport</keyword>
<feature type="chain" id="PRO_1000194482" description="Ion-translocating oxidoreductase complex subunit B">
    <location>
        <begin position="1"/>
        <end position="192"/>
    </location>
</feature>
<feature type="domain" description="4Fe-4S" evidence="1">
    <location>
        <begin position="32"/>
        <end position="91"/>
    </location>
</feature>
<feature type="domain" description="4Fe-4S ferredoxin-type 1" evidence="1">
    <location>
        <begin position="108"/>
        <end position="137"/>
    </location>
</feature>
<feature type="domain" description="4Fe-4S ferredoxin-type 2" evidence="1">
    <location>
        <begin position="138"/>
        <end position="167"/>
    </location>
</feature>
<feature type="region of interest" description="Hydrophobic" evidence="1">
    <location>
        <begin position="1"/>
        <end position="26"/>
    </location>
</feature>
<feature type="binding site" evidence="1">
    <location>
        <position position="49"/>
    </location>
    <ligand>
        <name>[4Fe-4S] cluster</name>
        <dbReference type="ChEBI" id="CHEBI:49883"/>
        <label>1</label>
    </ligand>
</feature>
<feature type="binding site" evidence="1">
    <location>
        <position position="52"/>
    </location>
    <ligand>
        <name>[4Fe-4S] cluster</name>
        <dbReference type="ChEBI" id="CHEBI:49883"/>
        <label>1</label>
    </ligand>
</feature>
<feature type="binding site" evidence="1">
    <location>
        <position position="57"/>
    </location>
    <ligand>
        <name>[4Fe-4S] cluster</name>
        <dbReference type="ChEBI" id="CHEBI:49883"/>
        <label>1</label>
    </ligand>
</feature>
<feature type="binding site" evidence="1">
    <location>
        <position position="74"/>
    </location>
    <ligand>
        <name>[4Fe-4S] cluster</name>
        <dbReference type="ChEBI" id="CHEBI:49883"/>
        <label>1</label>
    </ligand>
</feature>
<feature type="binding site" evidence="1">
    <location>
        <position position="117"/>
    </location>
    <ligand>
        <name>[4Fe-4S] cluster</name>
        <dbReference type="ChEBI" id="CHEBI:49883"/>
        <label>2</label>
    </ligand>
</feature>
<feature type="binding site" evidence="1">
    <location>
        <position position="120"/>
    </location>
    <ligand>
        <name>[4Fe-4S] cluster</name>
        <dbReference type="ChEBI" id="CHEBI:49883"/>
        <label>2</label>
    </ligand>
</feature>
<feature type="binding site" evidence="1">
    <location>
        <position position="123"/>
    </location>
    <ligand>
        <name>[4Fe-4S] cluster</name>
        <dbReference type="ChEBI" id="CHEBI:49883"/>
        <label>2</label>
    </ligand>
</feature>
<feature type="binding site" evidence="1">
    <location>
        <position position="127"/>
    </location>
    <ligand>
        <name>[4Fe-4S] cluster</name>
        <dbReference type="ChEBI" id="CHEBI:49883"/>
        <label>3</label>
    </ligand>
</feature>
<feature type="binding site" evidence="1">
    <location>
        <position position="147"/>
    </location>
    <ligand>
        <name>[4Fe-4S] cluster</name>
        <dbReference type="ChEBI" id="CHEBI:49883"/>
        <label>3</label>
    </ligand>
</feature>
<feature type="binding site" evidence="1">
    <location>
        <position position="150"/>
    </location>
    <ligand>
        <name>[4Fe-4S] cluster</name>
        <dbReference type="ChEBI" id="CHEBI:49883"/>
        <label>3</label>
    </ligand>
</feature>
<feature type="binding site" evidence="1">
    <location>
        <position position="153"/>
    </location>
    <ligand>
        <name>[4Fe-4S] cluster</name>
        <dbReference type="ChEBI" id="CHEBI:49883"/>
        <label>3</label>
    </ligand>
</feature>
<feature type="binding site" evidence="1">
    <location>
        <position position="157"/>
    </location>
    <ligand>
        <name>[4Fe-4S] cluster</name>
        <dbReference type="ChEBI" id="CHEBI:49883"/>
        <label>2</label>
    </ligand>
</feature>